<comment type="function">
    <text evidence="1">The alpha subunit is responsible for the aldol cleavage of indoleglycerol phosphate to indole and glyceraldehyde 3-phosphate.</text>
</comment>
<comment type="catalytic activity">
    <reaction evidence="1">
        <text>(1S,2R)-1-C-(indol-3-yl)glycerol 3-phosphate + L-serine = D-glyceraldehyde 3-phosphate + L-tryptophan + H2O</text>
        <dbReference type="Rhea" id="RHEA:10532"/>
        <dbReference type="ChEBI" id="CHEBI:15377"/>
        <dbReference type="ChEBI" id="CHEBI:33384"/>
        <dbReference type="ChEBI" id="CHEBI:57912"/>
        <dbReference type="ChEBI" id="CHEBI:58866"/>
        <dbReference type="ChEBI" id="CHEBI:59776"/>
        <dbReference type="EC" id="4.2.1.20"/>
    </reaction>
</comment>
<comment type="pathway">
    <text evidence="1">Amino-acid biosynthesis; L-tryptophan biosynthesis; L-tryptophan from chorismate: step 5/5.</text>
</comment>
<comment type="subunit">
    <text evidence="1">Tetramer of two alpha and two beta chains.</text>
</comment>
<comment type="similarity">
    <text evidence="1">Belongs to the TrpA family.</text>
</comment>
<dbReference type="EC" id="4.2.1.20" evidence="1"/>
<dbReference type="EMBL" id="CP000521">
    <property type="protein sequence ID" value="ABO13276.2"/>
    <property type="molecule type" value="Genomic_DNA"/>
</dbReference>
<dbReference type="RefSeq" id="WP_000088559.1">
    <property type="nucleotide sequence ID" value="NZ_CP053098.1"/>
</dbReference>
<dbReference type="SMR" id="A3M8N2"/>
<dbReference type="GeneID" id="92895147"/>
<dbReference type="KEGG" id="acb:A1S_2870"/>
<dbReference type="HOGENOM" id="CLU_016734_0_0_6"/>
<dbReference type="UniPathway" id="UPA00035">
    <property type="reaction ID" value="UER00044"/>
</dbReference>
<dbReference type="GO" id="GO:0005829">
    <property type="term" value="C:cytosol"/>
    <property type="evidence" value="ECO:0007669"/>
    <property type="project" value="TreeGrafter"/>
</dbReference>
<dbReference type="GO" id="GO:0004834">
    <property type="term" value="F:tryptophan synthase activity"/>
    <property type="evidence" value="ECO:0007669"/>
    <property type="project" value="UniProtKB-UniRule"/>
</dbReference>
<dbReference type="CDD" id="cd04724">
    <property type="entry name" value="Tryptophan_synthase_alpha"/>
    <property type="match status" value="1"/>
</dbReference>
<dbReference type="FunFam" id="3.20.20.70:FF:000037">
    <property type="entry name" value="Tryptophan synthase alpha chain"/>
    <property type="match status" value="1"/>
</dbReference>
<dbReference type="Gene3D" id="3.20.20.70">
    <property type="entry name" value="Aldolase class I"/>
    <property type="match status" value="1"/>
</dbReference>
<dbReference type="HAMAP" id="MF_00131">
    <property type="entry name" value="Trp_synth_alpha"/>
    <property type="match status" value="1"/>
</dbReference>
<dbReference type="InterPro" id="IPR013785">
    <property type="entry name" value="Aldolase_TIM"/>
</dbReference>
<dbReference type="InterPro" id="IPR011060">
    <property type="entry name" value="RibuloseP-bd_barrel"/>
</dbReference>
<dbReference type="InterPro" id="IPR018204">
    <property type="entry name" value="Trp_synthase_alpha_AS"/>
</dbReference>
<dbReference type="InterPro" id="IPR002028">
    <property type="entry name" value="Trp_synthase_suA"/>
</dbReference>
<dbReference type="NCBIfam" id="TIGR00262">
    <property type="entry name" value="trpA"/>
    <property type="match status" value="1"/>
</dbReference>
<dbReference type="PANTHER" id="PTHR43406:SF1">
    <property type="entry name" value="TRYPTOPHAN SYNTHASE ALPHA CHAIN, CHLOROPLASTIC"/>
    <property type="match status" value="1"/>
</dbReference>
<dbReference type="PANTHER" id="PTHR43406">
    <property type="entry name" value="TRYPTOPHAN SYNTHASE, ALPHA CHAIN"/>
    <property type="match status" value="1"/>
</dbReference>
<dbReference type="Pfam" id="PF00290">
    <property type="entry name" value="Trp_syntA"/>
    <property type="match status" value="1"/>
</dbReference>
<dbReference type="SUPFAM" id="SSF51366">
    <property type="entry name" value="Ribulose-phoshate binding barrel"/>
    <property type="match status" value="1"/>
</dbReference>
<dbReference type="PROSITE" id="PS00167">
    <property type="entry name" value="TRP_SYNTHASE_ALPHA"/>
    <property type="match status" value="1"/>
</dbReference>
<evidence type="ECO:0000255" key="1">
    <source>
        <dbReference type="HAMAP-Rule" id="MF_00131"/>
    </source>
</evidence>
<reference key="1">
    <citation type="journal article" date="2007" name="Genes Dev.">
        <title>New insights into Acinetobacter baumannii pathogenesis revealed by high-density pyrosequencing and transposon mutagenesis.</title>
        <authorList>
            <person name="Smith M.G."/>
            <person name="Gianoulis T.A."/>
            <person name="Pukatzki S."/>
            <person name="Mekalanos J.J."/>
            <person name="Ornston L.N."/>
            <person name="Gerstein M."/>
            <person name="Snyder M."/>
        </authorList>
    </citation>
    <scope>NUCLEOTIDE SEQUENCE [LARGE SCALE GENOMIC DNA]</scope>
    <source>
        <strain>ATCC 17978 / DSM 105126 / CIP 53.77 / LMG 1025 / NCDC KC755 / 5377</strain>
    </source>
</reference>
<proteinExistence type="inferred from homology"/>
<organism>
    <name type="scientific">Acinetobacter baumannii (strain ATCC 17978 / DSM 105126 / CIP 53.77 / LMG 1025 / NCDC KC755 / 5377)</name>
    <dbReference type="NCBI Taxonomy" id="400667"/>
    <lineage>
        <taxon>Bacteria</taxon>
        <taxon>Pseudomonadati</taxon>
        <taxon>Pseudomonadota</taxon>
        <taxon>Gammaproteobacteria</taxon>
        <taxon>Moraxellales</taxon>
        <taxon>Moraxellaceae</taxon>
        <taxon>Acinetobacter</taxon>
        <taxon>Acinetobacter calcoaceticus/baumannii complex</taxon>
    </lineage>
</organism>
<feature type="chain" id="PRO_1000095686" description="Tryptophan synthase alpha chain">
    <location>
        <begin position="1"/>
        <end position="267"/>
    </location>
</feature>
<feature type="active site" description="Proton acceptor" evidence="1">
    <location>
        <position position="49"/>
    </location>
</feature>
<feature type="active site" description="Proton acceptor" evidence="1">
    <location>
        <position position="60"/>
    </location>
</feature>
<protein>
    <recommendedName>
        <fullName evidence="1">Tryptophan synthase alpha chain</fullName>
        <ecNumber evidence="1">4.2.1.20</ecNumber>
    </recommendedName>
</protein>
<keyword id="KW-0028">Amino-acid biosynthesis</keyword>
<keyword id="KW-0057">Aromatic amino acid biosynthesis</keyword>
<keyword id="KW-0456">Lyase</keyword>
<keyword id="KW-0822">Tryptophan biosynthesis</keyword>
<name>TRPA_ACIBT</name>
<sequence length="267" mass="28441">MSRLATRFEKLQSQQRKALVSYVMAGDPQPQVTVPLLHKMVAAGVDVIELGLPFSDPMADGPVIALAAERALAAGTNTLDALNMVKEFREQDQETPVVLMGYLNPVEVIGYEKFVSYAKQCGVDGLLLVDLPPEESKEFGAILKQHDMDQIFLLAPTSTDQRIQHVANQASGFIYYVSLKGVTGAATLDTSEAAARIEKIKGMTNVPVGVGFGISDAASAKAMGSVADAVIVGSAFVKSFATLAADEAVEQTVNKVKELRAALDELV</sequence>
<gene>
    <name evidence="1" type="primary">trpA</name>
    <name type="ordered locus">A1S_2870</name>
</gene>
<accession>A3M8N2</accession>